<dbReference type="EMBL" id="AAFI02000102">
    <property type="protein sequence ID" value="EAL63671.2"/>
    <property type="status" value="ALT_SEQ"/>
    <property type="molecule type" value="Genomic_DNA"/>
</dbReference>
<dbReference type="RefSeq" id="XP_637181.2">
    <property type="nucleotide sequence ID" value="XM_632089.2"/>
</dbReference>
<dbReference type="SMR" id="Q54K74"/>
<dbReference type="FunCoup" id="Q54K74">
    <property type="interactions" value="415"/>
</dbReference>
<dbReference type="STRING" id="44689.Q54K74"/>
<dbReference type="PaxDb" id="44689-DDB0266343"/>
<dbReference type="EnsemblProtists" id="EAL63671">
    <property type="protein sequence ID" value="EAL63671"/>
    <property type="gene ID" value="DDB_G0287543"/>
</dbReference>
<dbReference type="GeneID" id="8626182"/>
<dbReference type="KEGG" id="ddi:DDB_G0287543"/>
<dbReference type="dictyBase" id="DDB_G0287543"/>
<dbReference type="VEuPathDB" id="AmoebaDB:DDB_G0287543"/>
<dbReference type="eggNOG" id="KOG1962">
    <property type="taxonomic scope" value="Eukaryota"/>
</dbReference>
<dbReference type="InParanoid" id="Q54K74"/>
<dbReference type="PhylomeDB" id="Q54K74"/>
<dbReference type="Reactome" id="R-DDI-75153">
    <property type="pathway name" value="Apoptotic execution phase"/>
</dbReference>
<dbReference type="PRO" id="PR:Q54K74"/>
<dbReference type="Proteomes" id="UP000002195">
    <property type="component" value="Chromosome 5"/>
</dbReference>
<dbReference type="GO" id="GO:0005789">
    <property type="term" value="C:endoplasmic reticulum membrane"/>
    <property type="evidence" value="ECO:0000318"/>
    <property type="project" value="GO_Central"/>
</dbReference>
<dbReference type="GO" id="GO:0006888">
    <property type="term" value="P:endoplasmic reticulum to Golgi vesicle-mediated transport"/>
    <property type="evidence" value="ECO:0000318"/>
    <property type="project" value="GO_Central"/>
</dbReference>
<dbReference type="GO" id="GO:0006886">
    <property type="term" value="P:intracellular protein transport"/>
    <property type="evidence" value="ECO:0007669"/>
    <property type="project" value="InterPro"/>
</dbReference>
<dbReference type="GO" id="GO:0070973">
    <property type="term" value="P:protein localization to endoplasmic reticulum exit site"/>
    <property type="evidence" value="ECO:0000318"/>
    <property type="project" value="GO_Central"/>
</dbReference>
<dbReference type="InterPro" id="IPR008417">
    <property type="entry name" value="BAP29/BAP31"/>
</dbReference>
<dbReference type="InterPro" id="IPR040463">
    <property type="entry name" value="BAP29/BAP31_N"/>
</dbReference>
<dbReference type="InterPro" id="IPR041672">
    <property type="entry name" value="Bap31/Bap29_C"/>
</dbReference>
<dbReference type="PANTHER" id="PTHR12701">
    <property type="entry name" value="BCR-ASSOCIATED PROTEIN, BAP"/>
    <property type="match status" value="1"/>
</dbReference>
<dbReference type="PANTHER" id="PTHR12701:SF20">
    <property type="entry name" value="ENDOPLASMIC RETICULUM TRANSMEMBRANE PROTEIN"/>
    <property type="match status" value="1"/>
</dbReference>
<dbReference type="Pfam" id="PF05529">
    <property type="entry name" value="Bap31"/>
    <property type="match status" value="1"/>
</dbReference>
<dbReference type="Pfam" id="PF18035">
    <property type="entry name" value="Bap31_Bap29_C"/>
    <property type="match status" value="1"/>
</dbReference>
<protein>
    <recommendedName>
        <fullName>Endoplasmic reticulum transmembrane protein YET-like</fullName>
    </recommendedName>
</protein>
<gene>
    <name type="ORF">DDB_G0287543</name>
</gene>
<sequence>MEFLMTLVFLVLLVEIVFCTFFMLPVSMHLRKNVYNKLDKLFGGQNAKIFLKVLALLVIIVFCDSIVNSYNINKKLHTPELTGAKFDRQNEYTRMFRYQRNSYICGFCLYLFFLIYRSQGIISQLSNVEASKTAIEKQTKNNLNTVETLLSENEKLKTEIKDLKKMEKEHKAMKSQAENTTKEYLKLQEEYNQLLGKKPKTQKKDD</sequence>
<name>YETL_DICDI</name>
<organism>
    <name type="scientific">Dictyostelium discoideum</name>
    <name type="common">Social amoeba</name>
    <dbReference type="NCBI Taxonomy" id="44689"/>
    <lineage>
        <taxon>Eukaryota</taxon>
        <taxon>Amoebozoa</taxon>
        <taxon>Evosea</taxon>
        <taxon>Eumycetozoa</taxon>
        <taxon>Dictyostelia</taxon>
        <taxon>Dictyosteliales</taxon>
        <taxon>Dictyosteliaceae</taxon>
        <taxon>Dictyostelium</taxon>
    </lineage>
</organism>
<reference key="1">
    <citation type="journal article" date="2005" name="Nature">
        <title>The genome of the social amoeba Dictyostelium discoideum.</title>
        <authorList>
            <person name="Eichinger L."/>
            <person name="Pachebat J.A."/>
            <person name="Gloeckner G."/>
            <person name="Rajandream M.A."/>
            <person name="Sucgang R."/>
            <person name="Berriman M."/>
            <person name="Song J."/>
            <person name="Olsen R."/>
            <person name="Szafranski K."/>
            <person name="Xu Q."/>
            <person name="Tunggal B."/>
            <person name="Kummerfeld S."/>
            <person name="Madera M."/>
            <person name="Konfortov B.A."/>
            <person name="Rivero F."/>
            <person name="Bankier A.T."/>
            <person name="Lehmann R."/>
            <person name="Hamlin N."/>
            <person name="Davies R."/>
            <person name="Gaudet P."/>
            <person name="Fey P."/>
            <person name="Pilcher K."/>
            <person name="Chen G."/>
            <person name="Saunders D."/>
            <person name="Sodergren E.J."/>
            <person name="Davis P."/>
            <person name="Kerhornou A."/>
            <person name="Nie X."/>
            <person name="Hall N."/>
            <person name="Anjard C."/>
            <person name="Hemphill L."/>
            <person name="Bason N."/>
            <person name="Farbrother P."/>
            <person name="Desany B."/>
            <person name="Just E."/>
            <person name="Morio T."/>
            <person name="Rost R."/>
            <person name="Churcher C.M."/>
            <person name="Cooper J."/>
            <person name="Haydock S."/>
            <person name="van Driessche N."/>
            <person name="Cronin A."/>
            <person name="Goodhead I."/>
            <person name="Muzny D.M."/>
            <person name="Mourier T."/>
            <person name="Pain A."/>
            <person name="Lu M."/>
            <person name="Harper D."/>
            <person name="Lindsay R."/>
            <person name="Hauser H."/>
            <person name="James K.D."/>
            <person name="Quiles M."/>
            <person name="Madan Babu M."/>
            <person name="Saito T."/>
            <person name="Buchrieser C."/>
            <person name="Wardroper A."/>
            <person name="Felder M."/>
            <person name="Thangavelu M."/>
            <person name="Johnson D."/>
            <person name="Knights A."/>
            <person name="Loulseged H."/>
            <person name="Mungall K.L."/>
            <person name="Oliver K."/>
            <person name="Price C."/>
            <person name="Quail M.A."/>
            <person name="Urushihara H."/>
            <person name="Hernandez J."/>
            <person name="Rabbinowitsch E."/>
            <person name="Steffen D."/>
            <person name="Sanders M."/>
            <person name="Ma J."/>
            <person name="Kohara Y."/>
            <person name="Sharp S."/>
            <person name="Simmonds M.N."/>
            <person name="Spiegler S."/>
            <person name="Tivey A."/>
            <person name="Sugano S."/>
            <person name="White B."/>
            <person name="Walker D."/>
            <person name="Woodward J.R."/>
            <person name="Winckler T."/>
            <person name="Tanaka Y."/>
            <person name="Shaulsky G."/>
            <person name="Schleicher M."/>
            <person name="Weinstock G.M."/>
            <person name="Rosenthal A."/>
            <person name="Cox E.C."/>
            <person name="Chisholm R.L."/>
            <person name="Gibbs R.A."/>
            <person name="Loomis W.F."/>
            <person name="Platzer M."/>
            <person name="Kay R.R."/>
            <person name="Williams J.G."/>
            <person name="Dear P.H."/>
            <person name="Noegel A.A."/>
            <person name="Barrell B.G."/>
            <person name="Kuspa A."/>
        </authorList>
    </citation>
    <scope>NUCLEOTIDE SEQUENCE [LARGE SCALE GENOMIC DNA]</scope>
    <source>
        <strain>AX4</strain>
    </source>
</reference>
<feature type="chain" id="PRO_0000327213" description="Endoplasmic reticulum transmembrane protein YET-like">
    <location>
        <begin position="1"/>
        <end position="206"/>
    </location>
</feature>
<feature type="topological domain" description="Lumenal" evidence="2">
    <location>
        <begin position="1"/>
        <end position="2"/>
    </location>
</feature>
<feature type="transmembrane region" description="Helical" evidence="2">
    <location>
        <begin position="3"/>
        <end position="23"/>
    </location>
</feature>
<feature type="topological domain" description="Cytoplasmic" evidence="2">
    <location>
        <begin position="24"/>
        <end position="46"/>
    </location>
</feature>
<feature type="transmembrane region" description="Helical" evidence="2">
    <location>
        <begin position="47"/>
        <end position="67"/>
    </location>
</feature>
<feature type="topological domain" description="Lumenal" evidence="2">
    <location>
        <begin position="68"/>
        <end position="101"/>
    </location>
</feature>
<feature type="transmembrane region" description="Helical" evidence="2">
    <location>
        <begin position="102"/>
        <end position="122"/>
    </location>
</feature>
<feature type="topological domain" description="Cytoplasmic" evidence="2">
    <location>
        <begin position="123"/>
        <end position="206"/>
    </location>
</feature>
<feature type="coiled-coil region" evidence="2">
    <location>
        <begin position="140"/>
        <end position="198"/>
    </location>
</feature>
<feature type="short sequence motif" description="Di-lysine motif">
    <location>
        <begin position="203"/>
        <end position="206"/>
    </location>
</feature>
<accession>Q54K74</accession>
<comment type="function">
    <text>May play a role in anterograde transport of membrane proteins from the endoplasmic reticulum to the Golgi.</text>
</comment>
<comment type="subcellular location">
    <subcellularLocation>
        <location evidence="1">Endoplasmic reticulum membrane</location>
        <topology evidence="1">Multi-pass membrane protein</topology>
    </subcellularLocation>
</comment>
<comment type="similarity">
    <text evidence="3">Belongs to the BCAP29/BCAP31 family.</text>
</comment>
<comment type="sequence caution" evidence="3">
    <conflict type="erroneous gene model prediction">
        <sequence resource="EMBL-CDS" id="EAL63671"/>
    </conflict>
    <text>Genome sequence is incorrect in N-terminal but ESTs confirm our prediction.</text>
</comment>
<evidence type="ECO:0000250" key="1"/>
<evidence type="ECO:0000255" key="2"/>
<evidence type="ECO:0000305" key="3"/>
<keyword id="KW-0175">Coiled coil</keyword>
<keyword id="KW-0256">Endoplasmic reticulum</keyword>
<keyword id="KW-0931">ER-Golgi transport</keyword>
<keyword id="KW-0472">Membrane</keyword>
<keyword id="KW-0653">Protein transport</keyword>
<keyword id="KW-1185">Reference proteome</keyword>
<keyword id="KW-0812">Transmembrane</keyword>
<keyword id="KW-1133">Transmembrane helix</keyword>
<keyword id="KW-0813">Transport</keyword>
<proteinExistence type="inferred from homology"/>